<keyword id="KW-1185">Reference proteome</keyword>
<keyword id="KW-0694">RNA-binding</keyword>
<keyword id="KW-0804">Transcription</keyword>
<keyword id="KW-0889">Transcription antitermination</keyword>
<keyword id="KW-0805">Transcription regulation</keyword>
<dbReference type="EMBL" id="BA000030">
    <property type="protein sequence ID" value="BAC74571.1"/>
    <property type="molecule type" value="Genomic_DNA"/>
</dbReference>
<dbReference type="RefSeq" id="WP_010988258.1">
    <property type="nucleotide sequence ID" value="NZ_JZJK01000082.1"/>
</dbReference>
<dbReference type="SMR" id="Q827R4"/>
<dbReference type="GeneID" id="41543935"/>
<dbReference type="KEGG" id="sma:SAVERM_6860"/>
<dbReference type="eggNOG" id="COG0781">
    <property type="taxonomic scope" value="Bacteria"/>
</dbReference>
<dbReference type="HOGENOM" id="CLU_087843_2_3_11"/>
<dbReference type="OrthoDB" id="3528057at2"/>
<dbReference type="Proteomes" id="UP000000428">
    <property type="component" value="Chromosome"/>
</dbReference>
<dbReference type="GO" id="GO:0005829">
    <property type="term" value="C:cytosol"/>
    <property type="evidence" value="ECO:0007669"/>
    <property type="project" value="TreeGrafter"/>
</dbReference>
<dbReference type="GO" id="GO:0003723">
    <property type="term" value="F:RNA binding"/>
    <property type="evidence" value="ECO:0007669"/>
    <property type="project" value="UniProtKB-UniRule"/>
</dbReference>
<dbReference type="GO" id="GO:0006353">
    <property type="term" value="P:DNA-templated transcription termination"/>
    <property type="evidence" value="ECO:0007669"/>
    <property type="project" value="UniProtKB-UniRule"/>
</dbReference>
<dbReference type="GO" id="GO:0031564">
    <property type="term" value="P:transcription antitermination"/>
    <property type="evidence" value="ECO:0007669"/>
    <property type="project" value="UniProtKB-KW"/>
</dbReference>
<dbReference type="Gene3D" id="1.10.940.10">
    <property type="entry name" value="NusB-like"/>
    <property type="match status" value="1"/>
</dbReference>
<dbReference type="HAMAP" id="MF_00073">
    <property type="entry name" value="NusB"/>
    <property type="match status" value="1"/>
</dbReference>
<dbReference type="InterPro" id="IPR035926">
    <property type="entry name" value="NusB-like_sf"/>
</dbReference>
<dbReference type="InterPro" id="IPR011605">
    <property type="entry name" value="NusB_fam"/>
</dbReference>
<dbReference type="InterPro" id="IPR006027">
    <property type="entry name" value="NusB_RsmB_TIM44"/>
</dbReference>
<dbReference type="NCBIfam" id="TIGR01951">
    <property type="entry name" value="nusB"/>
    <property type="match status" value="1"/>
</dbReference>
<dbReference type="PANTHER" id="PTHR11078:SF3">
    <property type="entry name" value="ANTITERMINATION NUSB DOMAIN-CONTAINING PROTEIN"/>
    <property type="match status" value="1"/>
</dbReference>
<dbReference type="PANTHER" id="PTHR11078">
    <property type="entry name" value="N UTILIZATION SUBSTANCE PROTEIN B-RELATED"/>
    <property type="match status" value="1"/>
</dbReference>
<dbReference type="Pfam" id="PF01029">
    <property type="entry name" value="NusB"/>
    <property type="match status" value="1"/>
</dbReference>
<dbReference type="SUPFAM" id="SSF48013">
    <property type="entry name" value="NusB-like"/>
    <property type="match status" value="1"/>
</dbReference>
<evidence type="ECO:0000255" key="1">
    <source>
        <dbReference type="HAMAP-Rule" id="MF_00073"/>
    </source>
</evidence>
<protein>
    <recommendedName>
        <fullName evidence="1">Transcription antitermination protein NusB</fullName>
    </recommendedName>
    <alternativeName>
        <fullName evidence="1">Antitermination factor NusB</fullName>
    </alternativeName>
</protein>
<name>NUSB_STRAW</name>
<reference key="1">
    <citation type="journal article" date="2001" name="Proc. Natl. Acad. Sci. U.S.A.">
        <title>Genome sequence of an industrial microorganism Streptomyces avermitilis: deducing the ability of producing secondary metabolites.</title>
        <authorList>
            <person name="Omura S."/>
            <person name="Ikeda H."/>
            <person name="Ishikawa J."/>
            <person name="Hanamoto A."/>
            <person name="Takahashi C."/>
            <person name="Shinose M."/>
            <person name="Takahashi Y."/>
            <person name="Horikawa H."/>
            <person name="Nakazawa H."/>
            <person name="Osonoe T."/>
            <person name="Kikuchi H."/>
            <person name="Shiba T."/>
            <person name="Sakaki Y."/>
            <person name="Hattori M."/>
        </authorList>
    </citation>
    <scope>NUCLEOTIDE SEQUENCE [LARGE SCALE GENOMIC DNA]</scope>
    <source>
        <strain>ATCC 31267 / DSM 46492 / JCM 5070 / NBRC 14893 / NCIMB 12804 / NRRL 8165 / MA-4680</strain>
    </source>
</reference>
<reference key="2">
    <citation type="journal article" date="2003" name="Nat. Biotechnol.">
        <title>Complete genome sequence and comparative analysis of the industrial microorganism Streptomyces avermitilis.</title>
        <authorList>
            <person name="Ikeda H."/>
            <person name="Ishikawa J."/>
            <person name="Hanamoto A."/>
            <person name="Shinose M."/>
            <person name="Kikuchi H."/>
            <person name="Shiba T."/>
            <person name="Sakaki Y."/>
            <person name="Hattori M."/>
            <person name="Omura S."/>
        </authorList>
    </citation>
    <scope>NUCLEOTIDE SEQUENCE [LARGE SCALE GENOMIC DNA]</scope>
    <source>
        <strain>ATCC 31267 / DSM 46492 / JCM 5070 / NBRC 14893 / NCIMB 12804 / NRRL 8165 / MA-4680</strain>
    </source>
</reference>
<gene>
    <name evidence="1" type="primary">nusB</name>
    <name type="ordered locus">SAV_6860</name>
</gene>
<comment type="function">
    <text evidence="1">Involved in transcription antitermination. Required for transcription of ribosomal RNA (rRNA) genes. Binds specifically to the boxA antiterminator sequence of the ribosomal RNA (rrn) operons.</text>
</comment>
<comment type="similarity">
    <text evidence="1">Belongs to the NusB family.</text>
</comment>
<proteinExistence type="inferred from homology"/>
<accession>Q827R4</accession>
<organism>
    <name type="scientific">Streptomyces avermitilis (strain ATCC 31267 / DSM 46492 / JCM 5070 / NBRC 14893 / NCIMB 12804 / NRRL 8165 / MA-4680)</name>
    <dbReference type="NCBI Taxonomy" id="227882"/>
    <lineage>
        <taxon>Bacteria</taxon>
        <taxon>Bacillati</taxon>
        <taxon>Actinomycetota</taxon>
        <taxon>Actinomycetes</taxon>
        <taxon>Kitasatosporales</taxon>
        <taxon>Streptomycetaceae</taxon>
        <taxon>Streptomyces</taxon>
    </lineage>
</organism>
<sequence>MAARNTARKRAFQILFEGDQRGVDVLTVLADWIRHSRTDTRQPPVSEYTMQLVEGYAKKVNRIDELISQYAVGWTLDRMPVVDRNILRLGTYELLWVDETPDAVVLDEAVQLAKEFSTDDSPAFVNGLLGRLKELKPSLRREEA</sequence>
<feature type="chain" id="PRO_0000176587" description="Transcription antitermination protein NusB">
    <location>
        <begin position="1"/>
        <end position="144"/>
    </location>
</feature>